<name>HYFA_ECOLI</name>
<proteinExistence type="evidence at transcript level"/>
<gene>
    <name evidence="5" type="primary">hyfA</name>
    <name type="synonym">yffE</name>
    <name type="ordered locus">b2481</name>
    <name type="ordered locus">JW2466</name>
</gene>
<feature type="chain" id="PRO_0000159267" description="Hydrogenase-4 component A">
    <location>
        <begin position="1"/>
        <end position="205"/>
    </location>
</feature>
<feature type="domain" description="4Fe-4S ferredoxin-type 1" evidence="2">
    <location>
        <begin position="2"/>
        <end position="31"/>
    </location>
</feature>
<feature type="domain" description="4Fe-4S ferredoxin-type 2" evidence="2">
    <location>
        <begin position="41"/>
        <end position="72"/>
    </location>
</feature>
<feature type="domain" description="4Fe-4S ferredoxin-type 3" evidence="2">
    <location>
        <begin position="73"/>
        <end position="102"/>
    </location>
</feature>
<feature type="domain" description="4Fe-4S ferredoxin-type 4" evidence="2">
    <location>
        <begin position="140"/>
        <end position="172"/>
    </location>
</feature>
<feature type="binding site" evidence="1">
    <location>
        <position position="12"/>
    </location>
    <ligand>
        <name>[4Fe-4S] cluster</name>
        <dbReference type="ChEBI" id="CHEBI:49883"/>
        <label>1</label>
    </ligand>
</feature>
<feature type="binding site" evidence="1">
    <location>
        <position position="15"/>
    </location>
    <ligand>
        <name>[4Fe-4S] cluster</name>
        <dbReference type="ChEBI" id="CHEBI:49883"/>
        <label>1</label>
    </ligand>
</feature>
<feature type="binding site" evidence="1">
    <location>
        <position position="18"/>
    </location>
    <ligand>
        <name>[4Fe-4S] cluster</name>
        <dbReference type="ChEBI" id="CHEBI:49883"/>
        <label>1</label>
    </ligand>
</feature>
<feature type="binding site" evidence="1">
    <location>
        <position position="22"/>
    </location>
    <ligand>
        <name>[4Fe-4S] cluster</name>
        <dbReference type="ChEBI" id="CHEBI:49883"/>
        <label>2</label>
    </ligand>
</feature>
<feature type="binding site" evidence="1">
    <location>
        <position position="51"/>
    </location>
    <ligand>
        <name>[4Fe-4S] cluster</name>
        <dbReference type="ChEBI" id="CHEBI:49883"/>
        <label>3</label>
    </ligand>
</feature>
<feature type="binding site" evidence="1">
    <location>
        <position position="54"/>
    </location>
    <ligand>
        <name>[4Fe-4S] cluster</name>
        <dbReference type="ChEBI" id="CHEBI:49883"/>
        <label>3</label>
    </ligand>
</feature>
<feature type="binding site" evidence="1">
    <location>
        <position position="59"/>
    </location>
    <ligand>
        <name>[4Fe-4S] cluster</name>
        <dbReference type="ChEBI" id="CHEBI:49883"/>
        <label>3</label>
    </ligand>
</feature>
<feature type="binding site" evidence="1">
    <location>
        <position position="63"/>
    </location>
    <ligand>
        <name>[4Fe-4S] cluster</name>
        <dbReference type="ChEBI" id="CHEBI:49883"/>
        <label>4</label>
    </ligand>
</feature>
<feature type="binding site" evidence="1">
    <location>
        <position position="82"/>
    </location>
    <ligand>
        <name>[4Fe-4S] cluster</name>
        <dbReference type="ChEBI" id="CHEBI:49883"/>
        <label>4</label>
    </ligand>
</feature>
<feature type="binding site" evidence="1">
    <location>
        <position position="85"/>
    </location>
    <ligand>
        <name>[4Fe-4S] cluster</name>
        <dbReference type="ChEBI" id="CHEBI:49883"/>
        <label>4</label>
    </ligand>
</feature>
<feature type="binding site" evidence="1">
    <location>
        <position position="88"/>
    </location>
    <ligand>
        <name>[4Fe-4S] cluster</name>
        <dbReference type="ChEBI" id="CHEBI:49883"/>
        <label>4</label>
    </ligand>
</feature>
<feature type="binding site" evidence="1">
    <location>
        <position position="92"/>
    </location>
    <ligand>
        <name>[4Fe-4S] cluster</name>
        <dbReference type="ChEBI" id="CHEBI:49883"/>
        <label>3</label>
    </ligand>
</feature>
<feature type="binding site" evidence="1">
    <location>
        <position position="146"/>
    </location>
    <ligand>
        <name>[4Fe-4S] cluster</name>
        <dbReference type="ChEBI" id="CHEBI:49883"/>
        <label>2</label>
    </ligand>
</feature>
<feature type="binding site" evidence="1">
    <location>
        <position position="149"/>
    </location>
    <ligand>
        <name>[4Fe-4S] cluster</name>
        <dbReference type="ChEBI" id="CHEBI:49883"/>
        <label>2</label>
    </ligand>
</feature>
<feature type="binding site" evidence="1">
    <location>
        <position position="158"/>
    </location>
    <ligand>
        <name>[4Fe-4S] cluster</name>
        <dbReference type="ChEBI" id="CHEBI:49883"/>
        <label>2</label>
    </ligand>
</feature>
<feature type="binding site" evidence="1">
    <location>
        <position position="162"/>
    </location>
    <ligand>
        <name>[4Fe-4S] cluster</name>
        <dbReference type="ChEBI" id="CHEBI:49883"/>
        <label>1</label>
    </ligand>
</feature>
<protein>
    <recommendedName>
        <fullName>Hydrogenase-4 component A</fullName>
        <ecNumber>1.-.-.-</ecNumber>
    </recommendedName>
</protein>
<sequence length="205" mass="22154">MNRFVVAEPLWCTGCNTCLAACSDVHKTQGLQQHPRLALAKTSTITAPVVCHHCEEAPCLQVCPVNAISQRDDAIQLNESLCIGCKLCAVVCPFGAISASGSRPVNAHAQYVFQAEGSLKDGEENAPTQHALLRWEPGVQTVAVKCDLCDFLPEGPACVRACPNQALRLITGDSLQRQMKEKQRLAASWFANGGEDPLSLTQEQR</sequence>
<organism>
    <name type="scientific">Escherichia coli (strain K12)</name>
    <dbReference type="NCBI Taxonomy" id="83333"/>
    <lineage>
        <taxon>Bacteria</taxon>
        <taxon>Pseudomonadati</taxon>
        <taxon>Pseudomonadota</taxon>
        <taxon>Gammaproteobacteria</taxon>
        <taxon>Enterobacterales</taxon>
        <taxon>Enterobacteriaceae</taxon>
        <taxon>Escherichia</taxon>
    </lineage>
</organism>
<reference key="1">
    <citation type="journal article" date="1991" name="J. Gen. Microbiol.">
        <title>A molecular analysis of the 53.3 minute region of the Escherichia coli linkage map.</title>
        <authorList>
            <person name="Andrews S.C."/>
            <person name="Harrison P.M."/>
            <person name="Guest J.R."/>
        </authorList>
    </citation>
    <scope>NUCLEOTIDE SEQUENCE [GENOMIC DNA]</scope>
    <source>
        <strain>K12</strain>
    </source>
</reference>
<reference key="2">
    <citation type="journal article" date="1997" name="DNA Res.">
        <title>Construction of a contiguous 874-kb sequence of the Escherichia coli-K12 genome corresponding to 50.0-68.8 min on the linkage map and analysis of its sequence features.</title>
        <authorList>
            <person name="Yamamoto Y."/>
            <person name="Aiba H."/>
            <person name="Baba T."/>
            <person name="Hayashi K."/>
            <person name="Inada T."/>
            <person name="Isono K."/>
            <person name="Itoh T."/>
            <person name="Kimura S."/>
            <person name="Kitagawa M."/>
            <person name="Makino K."/>
            <person name="Miki T."/>
            <person name="Mitsuhashi N."/>
            <person name="Mizobuchi K."/>
            <person name="Mori H."/>
            <person name="Nakade S."/>
            <person name="Nakamura Y."/>
            <person name="Nashimoto H."/>
            <person name="Oshima T."/>
            <person name="Oyama S."/>
            <person name="Saito N."/>
            <person name="Sampei G."/>
            <person name="Satoh Y."/>
            <person name="Sivasundaram S."/>
            <person name="Tagami H."/>
            <person name="Takahashi H."/>
            <person name="Takeda J."/>
            <person name="Takemoto K."/>
            <person name="Uehara K."/>
            <person name="Wada C."/>
            <person name="Yamagata S."/>
            <person name="Horiuchi T."/>
        </authorList>
    </citation>
    <scope>NUCLEOTIDE SEQUENCE [LARGE SCALE GENOMIC DNA]</scope>
    <source>
        <strain>K12 / W3110 / ATCC 27325 / DSM 5911</strain>
    </source>
</reference>
<reference key="3">
    <citation type="journal article" date="1997" name="Science">
        <title>The complete genome sequence of Escherichia coli K-12.</title>
        <authorList>
            <person name="Blattner F.R."/>
            <person name="Plunkett G. III"/>
            <person name="Bloch C.A."/>
            <person name="Perna N.T."/>
            <person name="Burland V."/>
            <person name="Riley M."/>
            <person name="Collado-Vides J."/>
            <person name="Glasner J.D."/>
            <person name="Rode C.K."/>
            <person name="Mayhew G.F."/>
            <person name="Gregor J."/>
            <person name="Davis N.W."/>
            <person name="Kirkpatrick H.A."/>
            <person name="Goeden M.A."/>
            <person name="Rose D.J."/>
            <person name="Mau B."/>
            <person name="Shao Y."/>
        </authorList>
    </citation>
    <scope>NUCLEOTIDE SEQUENCE [LARGE SCALE GENOMIC DNA]</scope>
    <source>
        <strain>K12 / MG1655 / ATCC 47076</strain>
    </source>
</reference>
<reference key="4">
    <citation type="journal article" date="2006" name="Mol. Syst. Biol.">
        <title>Highly accurate genome sequences of Escherichia coli K-12 strains MG1655 and W3110.</title>
        <authorList>
            <person name="Hayashi K."/>
            <person name="Morooka N."/>
            <person name="Yamamoto Y."/>
            <person name="Fujita K."/>
            <person name="Isono K."/>
            <person name="Choi S."/>
            <person name="Ohtsubo E."/>
            <person name="Baba T."/>
            <person name="Wanner B.L."/>
            <person name="Mori H."/>
            <person name="Horiuchi T."/>
        </authorList>
    </citation>
    <scope>NUCLEOTIDE SEQUENCE [LARGE SCALE GENOMIC DNA]</scope>
    <source>
        <strain>K12 / W3110 / ATCC 27325 / DSM 5911</strain>
    </source>
</reference>
<reference key="5">
    <citation type="journal article" date="1997" name="Microbiology">
        <title>A 12-cistron Escherichia coli operon (hyf) encoding a putative proton-translocating formate hydrogenlyase system.</title>
        <authorList>
            <person name="Andrews S.C."/>
            <person name="Berks B.C."/>
            <person name="McClay J."/>
            <person name="Ambler A."/>
            <person name="Quail M.A."/>
            <person name="Golby P."/>
            <person name="Guest J.R."/>
        </authorList>
    </citation>
    <scope>POSSIBLE FUNCTION</scope>
</reference>
<reference key="6">
    <citation type="journal article" date="2002" name="J. Bacteriol.">
        <title>Regulation of the hydrogenase-4 operon of Escherichia coli by the sigma(54)-dependent transcriptional activators FhlA and HyfR.</title>
        <authorList>
            <person name="Skibinski D.A."/>
            <person name="Golby P."/>
            <person name="Chang Y.S."/>
            <person name="Sargent F."/>
            <person name="Hoffman R."/>
            <person name="Harper R."/>
            <person name="Guest J.R."/>
            <person name="Attwood M.M."/>
            <person name="Berks B.C."/>
            <person name="Andrews S.C."/>
        </authorList>
    </citation>
    <scope>INDUCTION</scope>
    <scope>OPERON</scope>
    <source>
        <strain>K12 / MC4100 / ATCC 35695 / DSM 6574</strain>
    </source>
</reference>
<reference key="7">
    <citation type="journal article" date="2004" name="J. Bacteriol.">
        <title>Expression and regulation of a silent operon, hyf, coding for hydrogenase 4 isoenzyme in Escherichia coli.</title>
        <authorList>
            <person name="Self W.T."/>
            <person name="Hasona A."/>
            <person name="Shanmugam K.T."/>
        </authorList>
    </citation>
    <scope>INDUCTION</scope>
    <source>
        <strain>K12</strain>
    </source>
</reference>
<accession>P23481</accession>
<accession>P76565</accession>
<evidence type="ECO:0000250" key="1"/>
<evidence type="ECO:0000255" key="2">
    <source>
        <dbReference type="PROSITE-ProRule" id="PRU00711"/>
    </source>
</evidence>
<evidence type="ECO:0000269" key="3">
    <source>
    </source>
</evidence>
<evidence type="ECO:0000269" key="4">
    <source>
    </source>
</evidence>
<evidence type="ECO:0000303" key="5">
    <source>
    </source>
</evidence>
<evidence type="ECO:0000305" key="6">
    <source>
    </source>
</evidence>
<keyword id="KW-0004">4Fe-4S</keyword>
<keyword id="KW-0249">Electron transport</keyword>
<keyword id="KW-0408">Iron</keyword>
<keyword id="KW-0411">Iron-sulfur</keyword>
<keyword id="KW-0479">Metal-binding</keyword>
<keyword id="KW-0560">Oxidoreductase</keyword>
<keyword id="KW-1185">Reference proteome</keyword>
<keyword id="KW-0677">Repeat</keyword>
<keyword id="KW-0813">Transport</keyword>
<dbReference type="EC" id="1.-.-.-"/>
<dbReference type="EMBL" id="M63654">
    <property type="protein sequence ID" value="AAB88563.1"/>
    <property type="molecule type" value="Genomic_DNA"/>
</dbReference>
<dbReference type="EMBL" id="U00096">
    <property type="protein sequence ID" value="AAC75534.2"/>
    <property type="molecule type" value="Genomic_DNA"/>
</dbReference>
<dbReference type="EMBL" id="AP009048">
    <property type="protein sequence ID" value="BAA16359.1"/>
    <property type="molecule type" value="Genomic_DNA"/>
</dbReference>
<dbReference type="PIR" id="H65023">
    <property type="entry name" value="H65023"/>
</dbReference>
<dbReference type="RefSeq" id="NP_416976.4">
    <property type="nucleotide sequence ID" value="NC_000913.3"/>
</dbReference>
<dbReference type="RefSeq" id="WP_001336048.1">
    <property type="nucleotide sequence ID" value="NZ_LN832404.1"/>
</dbReference>
<dbReference type="SMR" id="P23481"/>
<dbReference type="BioGRID" id="4259199">
    <property type="interactions" value="16"/>
</dbReference>
<dbReference type="DIP" id="DIP-9983N"/>
<dbReference type="FunCoup" id="P23481">
    <property type="interactions" value="105"/>
</dbReference>
<dbReference type="IntAct" id="P23481">
    <property type="interactions" value="3"/>
</dbReference>
<dbReference type="STRING" id="511145.b2481"/>
<dbReference type="TCDB" id="3.D.1.9.1">
    <property type="family name" value="the h+ or na+-translocating nadh dehydrogenase (ndh) family"/>
</dbReference>
<dbReference type="PaxDb" id="511145-b2481"/>
<dbReference type="EnsemblBacteria" id="AAC75534">
    <property type="protein sequence ID" value="AAC75534"/>
    <property type="gene ID" value="b2481"/>
</dbReference>
<dbReference type="GeneID" id="946959"/>
<dbReference type="KEGG" id="ecj:JW2466"/>
<dbReference type="KEGG" id="eco:b2481"/>
<dbReference type="KEGG" id="ecoc:C3026_13770"/>
<dbReference type="PATRIC" id="fig|1411691.4.peg.4258"/>
<dbReference type="EchoBASE" id="EB1139"/>
<dbReference type="eggNOG" id="COG1142">
    <property type="taxonomic scope" value="Bacteria"/>
</dbReference>
<dbReference type="HOGENOM" id="CLU_043374_3_0_6"/>
<dbReference type="InParanoid" id="P23481"/>
<dbReference type="OMA" id="ENAPCAH"/>
<dbReference type="OrthoDB" id="9779457at2"/>
<dbReference type="PhylomeDB" id="P23481"/>
<dbReference type="BioCyc" id="EcoCyc:MONOMER0-152"/>
<dbReference type="PRO" id="PR:P23481"/>
<dbReference type="Proteomes" id="UP000000625">
    <property type="component" value="Chromosome"/>
</dbReference>
<dbReference type="GO" id="GO:0051539">
    <property type="term" value="F:4 iron, 4 sulfur cluster binding"/>
    <property type="evidence" value="ECO:0007669"/>
    <property type="project" value="UniProtKB-KW"/>
</dbReference>
<dbReference type="GO" id="GO:0046872">
    <property type="term" value="F:metal ion binding"/>
    <property type="evidence" value="ECO:0007669"/>
    <property type="project" value="UniProtKB-KW"/>
</dbReference>
<dbReference type="GO" id="GO:0016491">
    <property type="term" value="F:oxidoreductase activity"/>
    <property type="evidence" value="ECO:0007669"/>
    <property type="project" value="UniProtKB-KW"/>
</dbReference>
<dbReference type="CDD" id="cd10554">
    <property type="entry name" value="HycB_like"/>
    <property type="match status" value="1"/>
</dbReference>
<dbReference type="Gene3D" id="3.30.70.20">
    <property type="match status" value="2"/>
</dbReference>
<dbReference type="InterPro" id="IPR017896">
    <property type="entry name" value="4Fe4S_Fe-S-bd"/>
</dbReference>
<dbReference type="InterPro" id="IPR017900">
    <property type="entry name" value="4Fe4S_Fe_S_CS"/>
</dbReference>
<dbReference type="InterPro" id="IPR050294">
    <property type="entry name" value="RnfB_subfamily"/>
</dbReference>
<dbReference type="PANTHER" id="PTHR42859:SF16">
    <property type="entry name" value="FORMATE HYDROGENLYASE SUBUNIT 2-RELATED"/>
    <property type="match status" value="1"/>
</dbReference>
<dbReference type="PANTHER" id="PTHR42859">
    <property type="entry name" value="OXIDOREDUCTASE"/>
    <property type="match status" value="1"/>
</dbReference>
<dbReference type="Pfam" id="PF00037">
    <property type="entry name" value="Fer4"/>
    <property type="match status" value="1"/>
</dbReference>
<dbReference type="Pfam" id="PF12800">
    <property type="entry name" value="Fer4_4"/>
    <property type="match status" value="1"/>
</dbReference>
<dbReference type="SUPFAM" id="SSF54862">
    <property type="entry name" value="4Fe-4S ferredoxins"/>
    <property type="match status" value="1"/>
</dbReference>
<dbReference type="PROSITE" id="PS00198">
    <property type="entry name" value="4FE4S_FER_1"/>
    <property type="match status" value="1"/>
</dbReference>
<dbReference type="PROSITE" id="PS51379">
    <property type="entry name" value="4FE4S_FER_2"/>
    <property type="match status" value="4"/>
</dbReference>
<comment type="function">
    <text evidence="6">Probable electron transfer protein for hydrogenase 4.</text>
</comment>
<comment type="cofactor">
    <cofactor evidence="1">
        <name>[4Fe-4S] cluster</name>
        <dbReference type="ChEBI" id="CHEBI:49883"/>
    </cofactor>
    <text evidence="1">Binds 4 [4Fe-4S] clusters.</text>
</comment>
<comment type="induction">
    <text evidence="3 4">Most efficiently induced by formate during post-exponential growth at low external pH (pH 6.5) in the absence of respiratory electron acceptors O(2+), NO(3-) or trimethylamine-N-oxide, i.e. under anaerobic control (PubMed:12426353, PubMed:14702328). Transcription is activated by FhlA and HyfR, inhibited by HycA, part of the sigma-54 (rpoN) regulon (PubMed:12426353). Subject to catabolite repression (PubMed:14702328). First member of a 10 gene operon (hyfABCDEFGHIJ); it is not clear if the 2 following genes (hydR-focB) are also in the operon (PubMed:12426353).</text>
</comment>